<keyword id="KW-0903">Direct protein sequencing</keyword>
<keyword id="KW-1015">Disulfide bond</keyword>
<keyword id="KW-0301">Gamma-carboxyglutamic acid</keyword>
<keyword id="KW-0528">Neurotoxin</keyword>
<keyword id="KW-0964">Secreted</keyword>
<keyword id="KW-0800">Toxin</keyword>
<name>CU9A_CONCL</name>
<accession>P0DJB6</accession>
<feature type="peptide" id="PRO_0000415052" description="Conotoxin Cl9a">
    <location>
        <begin position="1"/>
        <end position="44"/>
    </location>
</feature>
<feature type="modified residue" description="4-carboxyglutamate" evidence="4">
    <location>
        <position position="7"/>
    </location>
</feature>
<feature type="modified residue" description="4-carboxyglutamate" evidence="4">
    <location>
        <position position="8"/>
    </location>
</feature>
<feature type="modified residue" description="4-carboxyglutamate" evidence="4">
    <location>
        <position position="24"/>
    </location>
</feature>
<feature type="disulfide bond" evidence="1">
    <location>
        <begin position="9"/>
        <end position="33"/>
    </location>
</feature>
<feature type="disulfide bond" evidence="1">
    <location>
        <begin position="15"/>
        <end position="40"/>
    </location>
</feature>
<feature type="disulfide bond" evidence="1">
    <location>
        <begin position="23"/>
        <end position="42"/>
    </location>
</feature>
<sequence>TFEPNAEECIVDGRCKHRSDWPCEMSSGTTGRCDVSLGACGCSN</sequence>
<reference key="1">
    <citation type="journal article" date="2010" name="Mol. Phylogenet. Evol.">
        <title>Evolution of Conus peptide toxins: analysis of Conus californicus Reeve, 1844.</title>
        <authorList>
            <person name="Biggs J.S."/>
            <person name="Watkins M."/>
            <person name="Puillandre N."/>
            <person name="Ownby J.P."/>
            <person name="Lopez-Vera E."/>
            <person name="Christensen S."/>
            <person name="Moreno K.J."/>
            <person name="Bernaldez J."/>
            <person name="Licea-Navarro A."/>
            <person name="Corneli P.S."/>
            <person name="Olivera B.M."/>
        </authorList>
    </citation>
    <scope>PROTEIN SEQUENCE</scope>
    <scope>GAMMA-CARBOXYGLUTAMATION AT GLU-7; GLU-8 AND GLU-24</scope>
    <source>
        <tissue>Venom</tissue>
    </source>
</reference>
<dbReference type="GO" id="GO:0005576">
    <property type="term" value="C:extracellular region"/>
    <property type="evidence" value="ECO:0007669"/>
    <property type="project" value="UniProtKB-SubCell"/>
</dbReference>
<dbReference type="GO" id="GO:0090729">
    <property type="term" value="F:toxin activity"/>
    <property type="evidence" value="ECO:0007669"/>
    <property type="project" value="UniProtKB-KW"/>
</dbReference>
<organism>
    <name type="scientific">Californiconus californicus</name>
    <name type="common">California cone</name>
    <name type="synonym">Conus californicus</name>
    <dbReference type="NCBI Taxonomy" id="1736779"/>
    <lineage>
        <taxon>Eukaryota</taxon>
        <taxon>Metazoa</taxon>
        <taxon>Spiralia</taxon>
        <taxon>Lophotrochozoa</taxon>
        <taxon>Mollusca</taxon>
        <taxon>Gastropoda</taxon>
        <taxon>Caenogastropoda</taxon>
        <taxon>Neogastropoda</taxon>
        <taxon>Conoidea</taxon>
        <taxon>Conidae</taxon>
        <taxon>Californiconus</taxon>
    </lineage>
</organism>
<evidence type="ECO:0000250" key="1"/>
<evidence type="ECO:0000303" key="2">
    <source>
    </source>
</evidence>
<evidence type="ECO:0000305" key="3"/>
<evidence type="ECO:0000305" key="4">
    <source>
    </source>
</evidence>
<protein>
    <recommendedName>
        <fullName evidence="2">Conotoxin Cl9a</fullName>
    </recommendedName>
    <alternativeName>
        <fullName evidence="3">Cal9.7</fullName>
    </alternativeName>
</protein>
<comment type="subcellular location">
    <subcellularLocation>
        <location evidence="1">Secreted</location>
    </subcellularLocation>
</comment>
<comment type="tissue specificity">
    <text>Expressed by the venom duct.</text>
</comment>
<comment type="domain">
    <text>The cysteine framework is IX (C-C-C-C-C-C).</text>
</comment>
<proteinExistence type="evidence at protein level"/>